<reference key="1">
    <citation type="journal article" date="2007" name="Archaea">
        <title>The genome of Hyperthermus butylicus: a sulfur-reducing, peptide fermenting, neutrophilic Crenarchaeote growing up to 108 degrees C.</title>
        <authorList>
            <person name="Bruegger K."/>
            <person name="Chen L."/>
            <person name="Stark M."/>
            <person name="Zibat A."/>
            <person name="Redder P."/>
            <person name="Ruepp A."/>
            <person name="Awayez M."/>
            <person name="She Q."/>
            <person name="Garrett R.A."/>
            <person name="Klenk H.-P."/>
        </authorList>
    </citation>
    <scope>NUCLEOTIDE SEQUENCE [LARGE SCALE GENOMIC DNA]</scope>
    <source>
        <strain>DSM 5456 / JCM 9403 / PLM1-5</strain>
    </source>
</reference>
<proteinExistence type="inferred from homology"/>
<keyword id="KW-1185">Reference proteome</keyword>
<keyword id="KW-0687">Ribonucleoprotein</keyword>
<keyword id="KW-0689">Ribosomal protein</keyword>
<keyword id="KW-0694">RNA-binding</keyword>
<keyword id="KW-0699">rRNA-binding</keyword>
<gene>
    <name evidence="1" type="primary">rps11</name>
    <name type="ordered locus">Hbut_0529</name>
</gene>
<feature type="chain" id="PRO_0000294894" description="Small ribosomal subunit protein uS11">
    <location>
        <begin position="1"/>
        <end position="133"/>
    </location>
</feature>
<organism>
    <name type="scientific">Hyperthermus butylicus (strain DSM 5456 / JCM 9403 / PLM1-5)</name>
    <dbReference type="NCBI Taxonomy" id="415426"/>
    <lineage>
        <taxon>Archaea</taxon>
        <taxon>Thermoproteota</taxon>
        <taxon>Thermoprotei</taxon>
        <taxon>Desulfurococcales</taxon>
        <taxon>Pyrodictiaceae</taxon>
        <taxon>Hyperthermus</taxon>
    </lineage>
</organism>
<protein>
    <recommendedName>
        <fullName evidence="1">Small ribosomal subunit protein uS11</fullName>
    </recommendedName>
    <alternativeName>
        <fullName evidence="2">30S ribosomal protein S11</fullName>
    </alternativeName>
</protein>
<sequence>MVFSAREIKWGVAHIYSSYNNTIIHITDLTGAETVARTSGGMVVKADREKPSPYAAMLAASRAAQQAMDRGIMALHIKVRAPGGHGPKTPGPGAQAAIRALARAGFIIGRIEDVTPLPHDTTRRPGGRRGRRV</sequence>
<dbReference type="EMBL" id="CP000493">
    <property type="protein sequence ID" value="ABM80389.1"/>
    <property type="molecule type" value="Genomic_DNA"/>
</dbReference>
<dbReference type="RefSeq" id="WP_011821707.1">
    <property type="nucleotide sequence ID" value="NC_008818.1"/>
</dbReference>
<dbReference type="SMR" id="A2BK78"/>
<dbReference type="STRING" id="415426.Hbut_0529"/>
<dbReference type="EnsemblBacteria" id="ABM80389">
    <property type="protein sequence ID" value="ABM80389"/>
    <property type="gene ID" value="Hbut_0529"/>
</dbReference>
<dbReference type="GeneID" id="4782423"/>
<dbReference type="KEGG" id="hbu:Hbut_0529"/>
<dbReference type="eggNOG" id="arCOG04240">
    <property type="taxonomic scope" value="Archaea"/>
</dbReference>
<dbReference type="HOGENOM" id="CLU_072439_6_1_2"/>
<dbReference type="OrthoDB" id="12054at2157"/>
<dbReference type="Proteomes" id="UP000002593">
    <property type="component" value="Chromosome"/>
</dbReference>
<dbReference type="GO" id="GO:1990904">
    <property type="term" value="C:ribonucleoprotein complex"/>
    <property type="evidence" value="ECO:0007669"/>
    <property type="project" value="UniProtKB-KW"/>
</dbReference>
<dbReference type="GO" id="GO:0005840">
    <property type="term" value="C:ribosome"/>
    <property type="evidence" value="ECO:0007669"/>
    <property type="project" value="UniProtKB-KW"/>
</dbReference>
<dbReference type="GO" id="GO:0019843">
    <property type="term" value="F:rRNA binding"/>
    <property type="evidence" value="ECO:0007669"/>
    <property type="project" value="UniProtKB-UniRule"/>
</dbReference>
<dbReference type="GO" id="GO:0003735">
    <property type="term" value="F:structural constituent of ribosome"/>
    <property type="evidence" value="ECO:0007669"/>
    <property type="project" value="InterPro"/>
</dbReference>
<dbReference type="GO" id="GO:0006412">
    <property type="term" value="P:translation"/>
    <property type="evidence" value="ECO:0007669"/>
    <property type="project" value="UniProtKB-UniRule"/>
</dbReference>
<dbReference type="FunFam" id="3.30.420.80:FF:000007">
    <property type="entry name" value="30S ribosomal protein S11"/>
    <property type="match status" value="1"/>
</dbReference>
<dbReference type="Gene3D" id="3.30.420.80">
    <property type="entry name" value="Ribosomal protein S11"/>
    <property type="match status" value="1"/>
</dbReference>
<dbReference type="HAMAP" id="MF_01310">
    <property type="entry name" value="Ribosomal_uS11"/>
    <property type="match status" value="1"/>
</dbReference>
<dbReference type="InterPro" id="IPR001971">
    <property type="entry name" value="Ribosomal_uS11"/>
</dbReference>
<dbReference type="InterPro" id="IPR019961">
    <property type="entry name" value="Ribosomal_uS11_archaeal"/>
</dbReference>
<dbReference type="InterPro" id="IPR018102">
    <property type="entry name" value="Ribosomal_uS11_CS"/>
</dbReference>
<dbReference type="InterPro" id="IPR036967">
    <property type="entry name" value="Ribosomal_uS11_sf"/>
</dbReference>
<dbReference type="NCBIfam" id="TIGR03628">
    <property type="entry name" value="arch_S11P"/>
    <property type="match status" value="1"/>
</dbReference>
<dbReference type="NCBIfam" id="NF007176">
    <property type="entry name" value="PRK09607.1"/>
    <property type="match status" value="1"/>
</dbReference>
<dbReference type="PANTHER" id="PTHR11759">
    <property type="entry name" value="40S RIBOSOMAL PROTEIN S14/30S RIBOSOMAL PROTEIN S11"/>
    <property type="match status" value="1"/>
</dbReference>
<dbReference type="Pfam" id="PF00411">
    <property type="entry name" value="Ribosomal_S11"/>
    <property type="match status" value="1"/>
</dbReference>
<dbReference type="PIRSF" id="PIRSF002131">
    <property type="entry name" value="Ribosomal_S11"/>
    <property type="match status" value="1"/>
</dbReference>
<dbReference type="SUPFAM" id="SSF53137">
    <property type="entry name" value="Translational machinery components"/>
    <property type="match status" value="1"/>
</dbReference>
<dbReference type="PROSITE" id="PS00054">
    <property type="entry name" value="RIBOSOMAL_S11"/>
    <property type="match status" value="1"/>
</dbReference>
<evidence type="ECO:0000255" key="1">
    <source>
        <dbReference type="HAMAP-Rule" id="MF_01310"/>
    </source>
</evidence>
<evidence type="ECO:0000305" key="2"/>
<comment type="function">
    <text evidence="1">Located on the platform of the 30S subunit.</text>
</comment>
<comment type="subunit">
    <text evidence="1">Part of the 30S ribosomal subunit.</text>
</comment>
<comment type="similarity">
    <text evidence="1">Belongs to the universal ribosomal protein uS11 family.</text>
</comment>
<name>RS11_HYPBU</name>
<accession>A2BK78</accession>